<protein>
    <recommendedName>
        <fullName>Protein FAM131B</fullName>
    </recommendedName>
</protein>
<evidence type="ECO:0000250" key="1">
    <source>
        <dbReference type="UniProtKB" id="Q3TY60"/>
    </source>
</evidence>
<evidence type="ECO:0000256" key="2">
    <source>
        <dbReference type="SAM" id="MobiDB-lite"/>
    </source>
</evidence>
<evidence type="ECO:0000305" key="3"/>
<evidence type="ECO:0007744" key="4">
    <source>
    </source>
</evidence>
<keyword id="KW-0597">Phosphoprotein</keyword>
<keyword id="KW-1185">Reference proteome</keyword>
<gene>
    <name type="primary">Fam131b</name>
</gene>
<reference key="1">
    <citation type="journal article" date="2004" name="Genome Res.">
        <title>The status, quality, and expansion of the NIH full-length cDNA project: the Mammalian Gene Collection (MGC).</title>
        <authorList>
            <consortium name="The MGC Project Team"/>
        </authorList>
    </citation>
    <scope>NUCLEOTIDE SEQUENCE [LARGE SCALE MRNA]</scope>
    <source>
        <tissue>Brain</tissue>
    </source>
</reference>
<reference key="2">
    <citation type="journal article" date="2012" name="Nat. Commun.">
        <title>Quantitative maps of protein phosphorylation sites across 14 different rat organs and tissues.</title>
        <authorList>
            <person name="Lundby A."/>
            <person name="Secher A."/>
            <person name="Lage K."/>
            <person name="Nordsborg N.B."/>
            <person name="Dmytriyev A."/>
            <person name="Lundby C."/>
            <person name="Olsen J.V."/>
        </authorList>
    </citation>
    <scope>PHOSPHORYLATION [LARGE SCALE ANALYSIS] AT SER-114; SER-117; SER-297 AND SER-322</scope>
    <scope>IDENTIFICATION BY MASS SPECTROMETRY [LARGE SCALE ANALYSIS]</scope>
</reference>
<dbReference type="EMBL" id="BC092642">
    <property type="protein sequence ID" value="AAH92642.1"/>
    <property type="molecule type" value="mRNA"/>
</dbReference>
<dbReference type="RefSeq" id="NP_001020217.2">
    <property type="nucleotide sequence ID" value="NM_001025046.1"/>
</dbReference>
<dbReference type="FunCoup" id="Q568Z1">
    <property type="interactions" value="1443"/>
</dbReference>
<dbReference type="STRING" id="10116.ENSRNOP00000056203"/>
<dbReference type="iPTMnet" id="Q568Z1"/>
<dbReference type="PhosphoSitePlus" id="Q568Z1"/>
<dbReference type="PaxDb" id="10116-ENSRNOP00000056203"/>
<dbReference type="GeneID" id="500102"/>
<dbReference type="KEGG" id="rno:500102"/>
<dbReference type="UCSC" id="RGD:1560653">
    <property type="organism name" value="rat"/>
</dbReference>
<dbReference type="AGR" id="RGD:1560653"/>
<dbReference type="CTD" id="9715"/>
<dbReference type="RGD" id="1560653">
    <property type="gene designation" value="Fam131b"/>
</dbReference>
<dbReference type="eggNOG" id="ENOG502QXPE">
    <property type="taxonomic scope" value="Eukaryota"/>
</dbReference>
<dbReference type="InParanoid" id="Q568Z1"/>
<dbReference type="OrthoDB" id="17760at9989"/>
<dbReference type="PRO" id="PR:Q568Z1"/>
<dbReference type="Proteomes" id="UP000002494">
    <property type="component" value="Unplaced"/>
</dbReference>
<dbReference type="InterPro" id="IPR026782">
    <property type="entry name" value="FAM131"/>
</dbReference>
<dbReference type="PANTHER" id="PTHR15736:SF9">
    <property type="entry name" value="PROTEIN FAM131B"/>
    <property type="match status" value="1"/>
</dbReference>
<dbReference type="PANTHER" id="PTHR15736">
    <property type="entry name" value="PROTEIN FAM131B-RELATED"/>
    <property type="match status" value="1"/>
</dbReference>
<dbReference type="Pfam" id="PF15010">
    <property type="entry name" value="FAM131"/>
    <property type="match status" value="1"/>
</dbReference>
<proteinExistence type="evidence at protein level"/>
<comment type="similarity">
    <text evidence="3">Belongs to the FAM131 family.</text>
</comment>
<feature type="chain" id="PRO_0000253034" description="Protein FAM131B">
    <location>
        <begin position="1"/>
        <end position="332"/>
    </location>
</feature>
<feature type="region of interest" description="Disordered" evidence="2">
    <location>
        <begin position="1"/>
        <end position="22"/>
    </location>
</feature>
<feature type="region of interest" description="Disordered" evidence="2">
    <location>
        <begin position="221"/>
        <end position="332"/>
    </location>
</feature>
<feature type="compositionally biased region" description="Basic and acidic residues" evidence="2">
    <location>
        <begin position="272"/>
        <end position="281"/>
    </location>
</feature>
<feature type="compositionally biased region" description="Basic and acidic residues" evidence="2">
    <location>
        <begin position="288"/>
        <end position="302"/>
    </location>
</feature>
<feature type="compositionally biased region" description="Acidic residues" evidence="2">
    <location>
        <begin position="323"/>
        <end position="332"/>
    </location>
</feature>
<feature type="modified residue" description="Phosphoserine" evidence="1">
    <location>
        <position position="47"/>
    </location>
</feature>
<feature type="modified residue" description="Phosphoserine" evidence="4">
    <location>
        <position position="114"/>
    </location>
</feature>
<feature type="modified residue" description="Phosphoserine" evidence="4">
    <location>
        <position position="117"/>
    </location>
</feature>
<feature type="modified residue" description="Phosphoserine" evidence="1">
    <location>
        <position position="295"/>
    </location>
</feature>
<feature type="modified residue" description="Phosphoserine" evidence="4">
    <location>
        <position position="297"/>
    </location>
</feature>
<feature type="modified residue" description="Phosphoserine" evidence="1">
    <location>
        <position position="313"/>
    </location>
</feature>
<feature type="modified residue" description="Phosphothreonine" evidence="1">
    <location>
        <position position="316"/>
    </location>
</feature>
<feature type="modified residue" description="Phosphoserine" evidence="1">
    <location>
        <position position="317"/>
    </location>
</feature>
<feature type="modified residue" description="Phosphoserine" evidence="1">
    <location>
        <position position="318"/>
    </location>
</feature>
<feature type="modified residue" description="Phosphoserine" evidence="4">
    <location>
        <position position="322"/>
    </location>
</feature>
<organism>
    <name type="scientific">Rattus norvegicus</name>
    <name type="common">Rat</name>
    <dbReference type="NCBI Taxonomy" id="10116"/>
    <lineage>
        <taxon>Eukaryota</taxon>
        <taxon>Metazoa</taxon>
        <taxon>Chordata</taxon>
        <taxon>Craniata</taxon>
        <taxon>Vertebrata</taxon>
        <taxon>Euteleostomi</taxon>
        <taxon>Mammalia</taxon>
        <taxon>Eutheria</taxon>
        <taxon>Euarchontoglires</taxon>
        <taxon>Glires</taxon>
        <taxon>Rodentia</taxon>
        <taxon>Myomorpha</taxon>
        <taxon>Muroidea</taxon>
        <taxon>Muridae</taxon>
        <taxon>Murinae</taxon>
        <taxon>Rattus</taxon>
    </lineage>
</organism>
<sequence>MDSTSSLHGSSLHRPSTEQTRTDFSWDGINLSMEDTTSILPKLKRNSNAYGIGALAKSSFSGISRSMKDHVTKPTAMGQGRVAHMIEWQGWGKAPAIQPQHSHEAVRRDTDAYSDLSDGEKEARFLAGVMEQFAISEATLMAWSSMDGEDMSVNSTQEPLDCNYSDNYQELMESQDALAQAPMDGWPHSYVSQGMYCLGSSDAWEASDQSLIASPATGSYLGPAFDDSQPSLHDMGPSQPASGYSAQEPPPLLGVDTDWASEVGGVELARGPVEEEKRPLAPEEEEDAGCRDLESLSPREDPEMSTALSRKVSDVTSSGVQSFDEEEGDANN</sequence>
<name>F131B_RAT</name>
<accession>Q568Z1</accession>